<accession>A8FD81</accession>
<organism>
    <name type="scientific">Bacillus pumilus (strain SAFR-032)</name>
    <dbReference type="NCBI Taxonomy" id="315750"/>
    <lineage>
        <taxon>Bacteria</taxon>
        <taxon>Bacillati</taxon>
        <taxon>Bacillota</taxon>
        <taxon>Bacilli</taxon>
        <taxon>Bacillales</taxon>
        <taxon>Bacillaceae</taxon>
        <taxon>Bacillus</taxon>
    </lineage>
</organism>
<evidence type="ECO:0000255" key="1">
    <source>
        <dbReference type="HAMAP-Rule" id="MF_00621"/>
    </source>
</evidence>
<keyword id="KW-0963">Cytoplasm</keyword>
<keyword id="KW-0238">DNA-binding</keyword>
<keyword id="KW-0597">Phosphoprotein</keyword>
<keyword id="KW-0678">Repressor</keyword>
<keyword id="KW-0804">Transcription</keyword>
<keyword id="KW-0805">Transcription regulation</keyword>
<sequence>MALLQKTRIINSMLQDAAGKPVNFKEMAETLRDVIDSNIFVLSRRGKLLGYSINQQIENPRMKKMLEDRQFPEEYTKSLFNIPETSSNLDINSEYTAFPIENRDLFESGLTTIVPIIGGGDRLGTLILSRLQDTFKDDDLILAEYGATVVGMEILREKAEEIEEEARSKAVVQMAISSLSYSELEAIEHIFEELDGNEGLLVASKIADRVGITRSVIVNALRKLESAGVIESRSLGMKGTYIKVLNNKFLIELENLKSH</sequence>
<reference key="1">
    <citation type="journal article" date="2007" name="PLoS ONE">
        <title>Paradoxical DNA repair and peroxide resistance gene conservation in Bacillus pumilus SAFR-032.</title>
        <authorList>
            <person name="Gioia J."/>
            <person name="Yerrapragada S."/>
            <person name="Qin X."/>
            <person name="Jiang H."/>
            <person name="Igboeli O.C."/>
            <person name="Muzny D."/>
            <person name="Dugan-Rocha S."/>
            <person name="Ding Y."/>
            <person name="Hawes A."/>
            <person name="Liu W."/>
            <person name="Perez L."/>
            <person name="Kovar C."/>
            <person name="Dinh H."/>
            <person name="Lee S."/>
            <person name="Nazareth L."/>
            <person name="Blyth P."/>
            <person name="Holder M."/>
            <person name="Buhay C."/>
            <person name="Tirumalai M.R."/>
            <person name="Liu Y."/>
            <person name="Dasgupta I."/>
            <person name="Bokhetache L."/>
            <person name="Fujita M."/>
            <person name="Karouia F."/>
            <person name="Eswara Moorthy P."/>
            <person name="Siefert J."/>
            <person name="Uzman A."/>
            <person name="Buzumbo P."/>
            <person name="Verma A."/>
            <person name="Zwiya H."/>
            <person name="McWilliams B.D."/>
            <person name="Olowu A."/>
            <person name="Clinkenbeard K.D."/>
            <person name="Newcombe D."/>
            <person name="Golebiewski L."/>
            <person name="Petrosino J.F."/>
            <person name="Nicholson W.L."/>
            <person name="Fox G.E."/>
            <person name="Venkateswaran K."/>
            <person name="Highlander S.K."/>
            <person name="Weinstock G.M."/>
        </authorList>
    </citation>
    <scope>NUCLEOTIDE SEQUENCE [LARGE SCALE GENOMIC DNA]</scope>
    <source>
        <strain>SAFR-032</strain>
    </source>
</reference>
<feature type="chain" id="PRO_1000061380" description="Global transcriptional regulator CodY">
    <location>
        <begin position="1"/>
        <end position="259"/>
    </location>
</feature>
<feature type="DNA-binding region" description="H-T-H motif" evidence="1">
    <location>
        <begin position="203"/>
        <end position="222"/>
    </location>
</feature>
<feature type="region of interest" description="GAF domain" evidence="1">
    <location>
        <begin position="1"/>
        <end position="155"/>
    </location>
</feature>
<feature type="modified residue" description="Phosphoserine" evidence="1">
    <location>
        <position position="215"/>
    </location>
</feature>
<dbReference type="EMBL" id="CP000813">
    <property type="protein sequence ID" value="ABV62198.1"/>
    <property type="molecule type" value="Genomic_DNA"/>
</dbReference>
<dbReference type="RefSeq" id="WP_012009951.1">
    <property type="nucleotide sequence ID" value="NZ_VEIS01000003.1"/>
</dbReference>
<dbReference type="SMR" id="A8FD81"/>
<dbReference type="STRING" id="315750.BPUM_1515"/>
<dbReference type="GeneID" id="5620778"/>
<dbReference type="KEGG" id="bpu:BPUM_1515"/>
<dbReference type="eggNOG" id="COG4465">
    <property type="taxonomic scope" value="Bacteria"/>
</dbReference>
<dbReference type="HOGENOM" id="CLU_089581_0_0_9"/>
<dbReference type="OrthoDB" id="2056at2"/>
<dbReference type="Proteomes" id="UP000001355">
    <property type="component" value="Chromosome"/>
</dbReference>
<dbReference type="GO" id="GO:0005737">
    <property type="term" value="C:cytoplasm"/>
    <property type="evidence" value="ECO:0007669"/>
    <property type="project" value="UniProtKB-SubCell"/>
</dbReference>
<dbReference type="GO" id="GO:0003677">
    <property type="term" value="F:DNA binding"/>
    <property type="evidence" value="ECO:0007669"/>
    <property type="project" value="UniProtKB-UniRule"/>
</dbReference>
<dbReference type="GO" id="GO:0003700">
    <property type="term" value="F:DNA-binding transcription factor activity"/>
    <property type="evidence" value="ECO:0007669"/>
    <property type="project" value="InterPro"/>
</dbReference>
<dbReference type="GO" id="GO:0005525">
    <property type="term" value="F:GTP binding"/>
    <property type="evidence" value="ECO:0007669"/>
    <property type="project" value="InterPro"/>
</dbReference>
<dbReference type="GO" id="GO:0045892">
    <property type="term" value="P:negative regulation of DNA-templated transcription"/>
    <property type="evidence" value="ECO:0007669"/>
    <property type="project" value="UniProtKB-UniRule"/>
</dbReference>
<dbReference type="FunFam" id="1.10.10.10:FF:000034">
    <property type="entry name" value="GTP-sensing transcriptional pleiotropic repressor CodY"/>
    <property type="match status" value="1"/>
</dbReference>
<dbReference type="FunFam" id="3.30.450.40:FF:000003">
    <property type="entry name" value="GTP-sensing transcriptional pleiotropic repressor CodY"/>
    <property type="match status" value="1"/>
</dbReference>
<dbReference type="Gene3D" id="3.30.450.40">
    <property type="match status" value="1"/>
</dbReference>
<dbReference type="Gene3D" id="1.10.10.10">
    <property type="entry name" value="Winged helix-like DNA-binding domain superfamily/Winged helix DNA-binding domain"/>
    <property type="match status" value="1"/>
</dbReference>
<dbReference type="HAMAP" id="MF_00621">
    <property type="entry name" value="HTH_type_CodY"/>
    <property type="match status" value="1"/>
</dbReference>
<dbReference type="InterPro" id="IPR014154">
    <property type="entry name" value="CodY"/>
</dbReference>
<dbReference type="InterPro" id="IPR029016">
    <property type="entry name" value="GAF-like_dom_sf"/>
</dbReference>
<dbReference type="InterPro" id="IPR013198">
    <property type="entry name" value="GTP_trans_reg_CodY_C"/>
</dbReference>
<dbReference type="InterPro" id="IPR010312">
    <property type="entry name" value="Transc_reg_CodY_N"/>
</dbReference>
<dbReference type="InterPro" id="IPR036388">
    <property type="entry name" value="WH-like_DNA-bd_sf"/>
</dbReference>
<dbReference type="InterPro" id="IPR036390">
    <property type="entry name" value="WH_DNA-bd_sf"/>
</dbReference>
<dbReference type="NCBIfam" id="TIGR02787">
    <property type="entry name" value="codY_Gpos"/>
    <property type="match status" value="1"/>
</dbReference>
<dbReference type="NCBIfam" id="NF003170">
    <property type="entry name" value="PRK04158.1"/>
    <property type="match status" value="1"/>
</dbReference>
<dbReference type="PANTHER" id="PTHR40062:SF1">
    <property type="entry name" value="GLOBAL TRANSCRIPTIONAL REGULATOR CODY"/>
    <property type="match status" value="1"/>
</dbReference>
<dbReference type="PANTHER" id="PTHR40062">
    <property type="entry name" value="GTP-SENSING TRANSCRIPTIONAL PLEIOTROPIC REPRESSOR CODY"/>
    <property type="match status" value="1"/>
</dbReference>
<dbReference type="Pfam" id="PF06018">
    <property type="entry name" value="CodY"/>
    <property type="match status" value="1"/>
</dbReference>
<dbReference type="Pfam" id="PF08222">
    <property type="entry name" value="HTH_CodY"/>
    <property type="match status" value="1"/>
</dbReference>
<dbReference type="PIRSF" id="PIRSF011572">
    <property type="entry name" value="GTP_sensing_CodY"/>
    <property type="match status" value="1"/>
</dbReference>
<dbReference type="SUPFAM" id="SSF46785">
    <property type="entry name" value="Winged helix' DNA-binding domain"/>
    <property type="match status" value="1"/>
</dbReference>
<gene>
    <name evidence="1" type="primary">codY</name>
    <name type="ordered locus">BPUM_1515</name>
</gene>
<proteinExistence type="inferred from homology"/>
<comment type="function">
    <text evidence="1">DNA-binding global transcriptional regulator which is involved in the adaptive response to starvation and acts by directly or indirectly controlling the expression of numerous genes in response to nutrient availability. During rapid exponential growth, CodY is highly active and represses genes whose products allow adaptation to nutrient depletion.</text>
</comment>
<comment type="subcellular location">
    <subcellularLocation>
        <location evidence="1">Cytoplasm</location>
    </subcellularLocation>
</comment>
<comment type="similarity">
    <text evidence="1">Belongs to the CodY family.</text>
</comment>
<name>CODY_BACP2</name>
<protein>
    <recommendedName>
        <fullName evidence="1">Global transcriptional regulator CodY</fullName>
    </recommendedName>
</protein>